<comment type="function">
    <text evidence="1">Cell signaling peptide that may regulate plant stress, growth, and development. Mediates a rapid alkalinization of extracellular space by mediating a transient increase in the cytoplasmic Ca(2+) concentration leading to a calcium-dependent signaling events through a cell surface receptor and a concomitant activation of some intracellular mitogen-activated protein kinases (By similarity).</text>
</comment>
<comment type="subcellular location">
    <subcellularLocation>
        <location evidence="1">Secreted</location>
    </subcellularLocation>
</comment>
<comment type="induction">
    <text evidence="3">Accumulates during senescence.</text>
</comment>
<comment type="similarity">
    <text evidence="4">Belongs to the plant rapid alkalinization factor (RALF) family.</text>
</comment>
<feature type="signal peptide" evidence="2">
    <location>
        <begin position="1"/>
        <end position="25"/>
    </location>
</feature>
<feature type="chain" id="PRO_0000420296" description="Protein RALF-like 5">
    <location>
        <begin position="26"/>
        <end position="89"/>
    </location>
</feature>
<feature type="disulfide bond" evidence="1">
    <location>
        <begin position="39"/>
        <end position="48"/>
    </location>
</feature>
<feature type="disulfide bond" evidence="1">
    <location>
        <begin position="61"/>
        <end position="67"/>
    </location>
</feature>
<reference key="1">
    <citation type="journal article" date="2000" name="Nature">
        <title>Sequence and analysis of chromosome 1 of the plant Arabidopsis thaliana.</title>
        <authorList>
            <person name="Theologis A."/>
            <person name="Ecker J.R."/>
            <person name="Palm C.J."/>
            <person name="Federspiel N.A."/>
            <person name="Kaul S."/>
            <person name="White O."/>
            <person name="Alonso J."/>
            <person name="Altafi H."/>
            <person name="Araujo R."/>
            <person name="Bowman C.L."/>
            <person name="Brooks S.Y."/>
            <person name="Buehler E."/>
            <person name="Chan A."/>
            <person name="Chao Q."/>
            <person name="Chen H."/>
            <person name="Cheuk R.F."/>
            <person name="Chin C.W."/>
            <person name="Chung M.K."/>
            <person name="Conn L."/>
            <person name="Conway A.B."/>
            <person name="Conway A.R."/>
            <person name="Creasy T.H."/>
            <person name="Dewar K."/>
            <person name="Dunn P."/>
            <person name="Etgu P."/>
            <person name="Feldblyum T.V."/>
            <person name="Feng J.-D."/>
            <person name="Fong B."/>
            <person name="Fujii C.Y."/>
            <person name="Gill J.E."/>
            <person name="Goldsmith A.D."/>
            <person name="Haas B."/>
            <person name="Hansen N.F."/>
            <person name="Hughes B."/>
            <person name="Huizar L."/>
            <person name="Hunter J.L."/>
            <person name="Jenkins J."/>
            <person name="Johnson-Hopson C."/>
            <person name="Khan S."/>
            <person name="Khaykin E."/>
            <person name="Kim C.J."/>
            <person name="Koo H.L."/>
            <person name="Kremenetskaia I."/>
            <person name="Kurtz D.B."/>
            <person name="Kwan A."/>
            <person name="Lam B."/>
            <person name="Langin-Hooper S."/>
            <person name="Lee A."/>
            <person name="Lee J.M."/>
            <person name="Lenz C.A."/>
            <person name="Li J.H."/>
            <person name="Li Y.-P."/>
            <person name="Lin X."/>
            <person name="Liu S.X."/>
            <person name="Liu Z.A."/>
            <person name="Luros J.S."/>
            <person name="Maiti R."/>
            <person name="Marziali A."/>
            <person name="Militscher J."/>
            <person name="Miranda M."/>
            <person name="Nguyen M."/>
            <person name="Nierman W.C."/>
            <person name="Osborne B.I."/>
            <person name="Pai G."/>
            <person name="Peterson J."/>
            <person name="Pham P.K."/>
            <person name="Rizzo M."/>
            <person name="Rooney T."/>
            <person name="Rowley D."/>
            <person name="Sakano H."/>
            <person name="Salzberg S.L."/>
            <person name="Schwartz J.R."/>
            <person name="Shinn P."/>
            <person name="Southwick A.M."/>
            <person name="Sun H."/>
            <person name="Tallon L.J."/>
            <person name="Tambunga G."/>
            <person name="Toriumi M.J."/>
            <person name="Town C.D."/>
            <person name="Utterback T."/>
            <person name="Van Aken S."/>
            <person name="Vaysberg M."/>
            <person name="Vysotskaia V.S."/>
            <person name="Walker M."/>
            <person name="Wu D."/>
            <person name="Yu G."/>
            <person name="Fraser C.M."/>
            <person name="Venter J.C."/>
            <person name="Davis R.W."/>
        </authorList>
    </citation>
    <scope>NUCLEOTIDE SEQUENCE [LARGE SCALE GENOMIC DNA]</scope>
    <source>
        <strain>cv. Columbia</strain>
    </source>
</reference>
<reference key="2">
    <citation type="journal article" date="2017" name="Plant J.">
        <title>Araport11: a complete reannotation of the Arabidopsis thaliana reference genome.</title>
        <authorList>
            <person name="Cheng C.Y."/>
            <person name="Krishnakumar V."/>
            <person name="Chan A.P."/>
            <person name="Thibaud-Nissen F."/>
            <person name="Schobel S."/>
            <person name="Town C.D."/>
        </authorList>
    </citation>
    <scope>GENOME REANNOTATION</scope>
    <source>
        <strain>cv. Columbia</strain>
    </source>
</reference>
<reference key="3">
    <citation type="journal article" date="2002" name="In Silico Biol.">
        <title>Peptomics, identification of novel cationic Arabidopsis peptides with conserved sequence motifs.</title>
        <authorList>
            <person name="Olsen A.N."/>
            <person name="Mundy J."/>
            <person name="Skriver K."/>
        </authorList>
    </citation>
    <scope>INDUCTION BY SENESCENCE</scope>
    <scope>GENE FAMILY</scope>
    <scope>NOMENCLATURE</scope>
</reference>
<evidence type="ECO:0000250" key="1"/>
<evidence type="ECO:0000255" key="2"/>
<evidence type="ECO:0000269" key="3">
    <source>
    </source>
</evidence>
<evidence type="ECO:0000305" key="4"/>
<proteinExistence type="evidence at transcript level"/>
<protein>
    <recommendedName>
        <fullName>Protein RALF-like 5</fullName>
    </recommendedName>
</protein>
<organism>
    <name type="scientific">Arabidopsis thaliana</name>
    <name type="common">Mouse-ear cress</name>
    <dbReference type="NCBI Taxonomy" id="3702"/>
    <lineage>
        <taxon>Eukaryota</taxon>
        <taxon>Viridiplantae</taxon>
        <taxon>Streptophyta</taxon>
        <taxon>Embryophyta</taxon>
        <taxon>Tracheophyta</taxon>
        <taxon>Spermatophyta</taxon>
        <taxon>Magnoliopsida</taxon>
        <taxon>eudicotyledons</taxon>
        <taxon>Gunneridae</taxon>
        <taxon>Pentapetalae</taxon>
        <taxon>rosids</taxon>
        <taxon>malvids</taxon>
        <taxon>Brassicales</taxon>
        <taxon>Brassicaceae</taxon>
        <taxon>Camelineae</taxon>
        <taxon>Arabidopsis</taxon>
    </lineage>
</organism>
<dbReference type="EMBL" id="AC023064">
    <property type="status" value="NOT_ANNOTATED_CDS"/>
    <property type="molecule type" value="Genomic_DNA"/>
</dbReference>
<dbReference type="EMBL" id="CP002684">
    <property type="protein sequence ID" value="AEE31797.1"/>
    <property type="molecule type" value="Genomic_DNA"/>
</dbReference>
<dbReference type="RefSeq" id="NP_001077666.1">
    <property type="nucleotide sequence ID" value="NM_001084197.2"/>
</dbReference>
<dbReference type="SMR" id="A8MQI8"/>
<dbReference type="PaxDb" id="3702-AT1G35467.1"/>
<dbReference type="ProteomicsDB" id="228154"/>
<dbReference type="EnsemblPlants" id="AT1G35467.1">
    <property type="protein sequence ID" value="AT1G35467.1"/>
    <property type="gene ID" value="AT1G35467"/>
</dbReference>
<dbReference type="GeneID" id="5007769"/>
<dbReference type="Gramene" id="AT1G35467.1">
    <property type="protein sequence ID" value="AT1G35467.1"/>
    <property type="gene ID" value="AT1G35467"/>
</dbReference>
<dbReference type="KEGG" id="ath:AT1G35467"/>
<dbReference type="Araport" id="AT1G35467"/>
<dbReference type="TAIR" id="AT1G35467">
    <property type="gene designation" value="RALFL5"/>
</dbReference>
<dbReference type="HOGENOM" id="CLU_189400_0_0_1"/>
<dbReference type="InParanoid" id="A8MQI8"/>
<dbReference type="OMA" id="KAQVFMF"/>
<dbReference type="PhylomeDB" id="A8MQI8"/>
<dbReference type="PRO" id="PR:A8MQI8"/>
<dbReference type="Proteomes" id="UP000006548">
    <property type="component" value="Chromosome 1"/>
</dbReference>
<dbReference type="ExpressionAtlas" id="A8MQI8">
    <property type="expression patterns" value="baseline"/>
</dbReference>
<dbReference type="GO" id="GO:0048046">
    <property type="term" value="C:apoplast"/>
    <property type="evidence" value="ECO:0000250"/>
    <property type="project" value="TAIR"/>
</dbReference>
<dbReference type="GO" id="GO:0005179">
    <property type="term" value="F:hormone activity"/>
    <property type="evidence" value="ECO:0000250"/>
    <property type="project" value="UniProtKB"/>
</dbReference>
<dbReference type="GO" id="GO:0019722">
    <property type="term" value="P:calcium-mediated signaling"/>
    <property type="evidence" value="ECO:0000250"/>
    <property type="project" value="UniProtKB"/>
</dbReference>
<dbReference type="GO" id="GO:0007267">
    <property type="term" value="P:cell-cell signaling"/>
    <property type="evidence" value="ECO:0000250"/>
    <property type="project" value="TAIR"/>
</dbReference>
<dbReference type="GO" id="GO:0040008">
    <property type="term" value="P:regulation of growth"/>
    <property type="evidence" value="ECO:0007669"/>
    <property type="project" value="UniProtKB-ARBA"/>
</dbReference>
<dbReference type="InterPro" id="IPR008801">
    <property type="entry name" value="RALF"/>
</dbReference>
<dbReference type="PANTHER" id="PTHR34270">
    <property type="entry name" value="PROTEIN RALF-LIKE 15-RELATED"/>
    <property type="match status" value="1"/>
</dbReference>
<dbReference type="PANTHER" id="PTHR34270:SF3">
    <property type="entry name" value="PROTEIN RALF-LIKE 16-RELATED"/>
    <property type="match status" value="1"/>
</dbReference>
<dbReference type="Pfam" id="PF05498">
    <property type="entry name" value="RALF"/>
    <property type="match status" value="1"/>
</dbReference>
<accession>A8MQI8</accession>
<sequence>MLKAQVFMFVTVLVFVCVFINSNDAKRYIEYPPWQKHPCNPRFPTPDCYKRTPANPYRRGCTCISRCRRDCGGLSTWKKLLDTILKIPV</sequence>
<gene>
    <name type="primary">RALFL5</name>
    <name type="ordered locus">At1g35467</name>
    <name type="ORF">F12A4</name>
</gene>
<keyword id="KW-1015">Disulfide bond</keyword>
<keyword id="KW-0372">Hormone</keyword>
<keyword id="KW-1185">Reference proteome</keyword>
<keyword id="KW-0964">Secreted</keyword>
<keyword id="KW-0732">Signal</keyword>
<name>RLF5_ARATH</name>